<accession>A0A0M4M0T9</accession>
<organism>
    <name type="scientific">Tripterygium wilfordii</name>
    <name type="common">Thunder God vine</name>
    <dbReference type="NCBI Taxonomy" id="458696"/>
    <lineage>
        <taxon>Eukaryota</taxon>
        <taxon>Viridiplantae</taxon>
        <taxon>Streptophyta</taxon>
        <taxon>Embryophyta</taxon>
        <taxon>Tracheophyta</taxon>
        <taxon>Spermatophyta</taxon>
        <taxon>Magnoliopsida</taxon>
        <taxon>eudicotyledons</taxon>
        <taxon>Gunneridae</taxon>
        <taxon>Pentapetalae</taxon>
        <taxon>rosids</taxon>
        <taxon>fabids</taxon>
        <taxon>Celastrales</taxon>
        <taxon>Celastraceae</taxon>
        <taxon>Tripterygium</taxon>
    </lineage>
</organism>
<dbReference type="EC" id="5.5.1.28" evidence="5"/>
<dbReference type="EMBL" id="KP889113">
    <property type="protein sequence ID" value="ALE19958.1"/>
    <property type="molecule type" value="mRNA"/>
</dbReference>
<dbReference type="SMR" id="A0A0M4M0T9"/>
<dbReference type="GO" id="GO:0009507">
    <property type="term" value="C:chloroplast"/>
    <property type="evidence" value="ECO:0007669"/>
    <property type="project" value="UniProtKB-SubCell"/>
</dbReference>
<dbReference type="GO" id="GO:0016853">
    <property type="term" value="F:isomerase activity"/>
    <property type="evidence" value="ECO:0007669"/>
    <property type="project" value="UniProtKB-KW"/>
</dbReference>
<dbReference type="GO" id="GO:0000287">
    <property type="term" value="F:magnesium ion binding"/>
    <property type="evidence" value="ECO:0007669"/>
    <property type="project" value="InterPro"/>
</dbReference>
<dbReference type="GO" id="GO:0010333">
    <property type="term" value="F:terpene synthase activity"/>
    <property type="evidence" value="ECO:0007669"/>
    <property type="project" value="InterPro"/>
</dbReference>
<dbReference type="GO" id="GO:0009686">
    <property type="term" value="P:gibberellin biosynthetic process"/>
    <property type="evidence" value="ECO:0007669"/>
    <property type="project" value="TreeGrafter"/>
</dbReference>
<dbReference type="FunFam" id="1.50.10.160:FF:000001">
    <property type="entry name" value="Ent-copalyl diphosphate synthase"/>
    <property type="match status" value="1"/>
</dbReference>
<dbReference type="FunFam" id="1.50.10.130:FF:000002">
    <property type="entry name" value="Ent-copalyl diphosphate synthase, chloroplastic"/>
    <property type="match status" value="1"/>
</dbReference>
<dbReference type="Gene3D" id="1.50.10.160">
    <property type="match status" value="1"/>
</dbReference>
<dbReference type="Gene3D" id="1.10.600.10">
    <property type="entry name" value="Farnesyl Diphosphate Synthase"/>
    <property type="match status" value="1"/>
</dbReference>
<dbReference type="Gene3D" id="1.50.10.130">
    <property type="entry name" value="Terpene synthase, N-terminal domain"/>
    <property type="match status" value="1"/>
</dbReference>
<dbReference type="InterPro" id="IPR008949">
    <property type="entry name" value="Isoprenoid_synthase_dom_sf"/>
</dbReference>
<dbReference type="InterPro" id="IPR001906">
    <property type="entry name" value="Terpene_synth_N"/>
</dbReference>
<dbReference type="InterPro" id="IPR036965">
    <property type="entry name" value="Terpene_synth_N_sf"/>
</dbReference>
<dbReference type="InterPro" id="IPR050148">
    <property type="entry name" value="Terpene_synthase-like"/>
</dbReference>
<dbReference type="InterPro" id="IPR005630">
    <property type="entry name" value="Terpene_synthase_metal-bd"/>
</dbReference>
<dbReference type="InterPro" id="IPR008930">
    <property type="entry name" value="Terpenoid_cyclase/PrenylTrfase"/>
</dbReference>
<dbReference type="PANTHER" id="PTHR31739">
    <property type="entry name" value="ENT-COPALYL DIPHOSPHATE SYNTHASE, CHLOROPLASTIC"/>
    <property type="match status" value="1"/>
</dbReference>
<dbReference type="PANTHER" id="PTHR31739:SF4">
    <property type="entry name" value="ENT-COPALYL DIPHOSPHATE SYNTHASE, CHLOROPLASTIC"/>
    <property type="match status" value="1"/>
</dbReference>
<dbReference type="Pfam" id="PF01397">
    <property type="entry name" value="Terpene_synth"/>
    <property type="match status" value="1"/>
</dbReference>
<dbReference type="Pfam" id="PF03936">
    <property type="entry name" value="Terpene_synth_C"/>
    <property type="match status" value="1"/>
</dbReference>
<dbReference type="SFLD" id="SFLDG01014">
    <property type="entry name" value="Terpene_Cyclase_Like_1_N-term"/>
    <property type="match status" value="1"/>
</dbReference>
<dbReference type="SFLD" id="SFLDG01605">
    <property type="entry name" value="Terpene_Cyclase_Like_1_N-term"/>
    <property type="match status" value="1"/>
</dbReference>
<dbReference type="SUPFAM" id="SSF48239">
    <property type="entry name" value="Terpenoid cyclases/Protein prenyltransferases"/>
    <property type="match status" value="2"/>
</dbReference>
<dbReference type="SUPFAM" id="SSF48576">
    <property type="entry name" value="Terpenoid synthases"/>
    <property type="match status" value="1"/>
</dbReference>
<proteinExistence type="evidence at protein level"/>
<reference key="1">
    <citation type="journal article" date="2016" name="Angew. Chem. Int. Ed.">
        <title>Expanding the landscape of diterpene structural diversity through stereochemically controlled combinatorial biosynthesis.</title>
        <authorList>
            <person name="Andersen-Ranberg J."/>
            <person name="Kongstad K.T."/>
            <person name="Nielsen M.T."/>
            <person name="Jensen N.B."/>
            <person name="Pateraki I."/>
            <person name="Bach S.S."/>
            <person name="Hamberger B."/>
            <person name="Zerbe P."/>
            <person name="Staerk D."/>
            <person name="Bohlmann J."/>
            <person name="Moeller B.L."/>
            <person name="Hamberger B."/>
        </authorList>
    </citation>
    <scope>NUCLEOTIDE SEQUENCE [MRNA]</scope>
    <scope>FUNCTION</scope>
    <scope>CATALYTIC ACTIVITY</scope>
    <scope>DXDD MOTIF</scope>
</reference>
<gene>
    <name evidence="6" type="primary">TPS28</name>
</gene>
<evidence type="ECO:0000250" key="1">
    <source>
        <dbReference type="UniProtKB" id="A0A1S5RW73"/>
    </source>
</evidence>
<evidence type="ECO:0000250" key="2">
    <source>
        <dbReference type="UniProtKB" id="C7BKP9"/>
    </source>
</evidence>
<evidence type="ECO:0000250" key="3">
    <source>
        <dbReference type="UniProtKB" id="Q38802"/>
    </source>
</evidence>
<evidence type="ECO:0000255" key="4"/>
<evidence type="ECO:0000269" key="5">
    <source>
    </source>
</evidence>
<evidence type="ECO:0000303" key="6">
    <source>
    </source>
</evidence>
<evidence type="ECO:0000305" key="7"/>
<evidence type="ECO:0000305" key="8">
    <source>
    </source>
</evidence>
<comment type="function">
    <text evidence="5">Diterpene synthase that catalyzes the formation of (-)-kolavenyl diphosphate from geranylgeranyl diphosphate (GGPP).</text>
</comment>
<comment type="catalytic activity">
    <reaction evidence="5">
        <text>(2E,6E,10E)-geranylgeranyl diphosphate = (-)-kolavenyl diphosphate</text>
        <dbReference type="Rhea" id="RHEA:54684"/>
        <dbReference type="ChEBI" id="CHEBI:58756"/>
        <dbReference type="ChEBI" id="CHEBI:138310"/>
        <dbReference type="EC" id="5.5.1.28"/>
    </reaction>
    <physiologicalReaction direction="left-to-right" evidence="5">
        <dbReference type="Rhea" id="RHEA:54685"/>
    </physiologicalReaction>
</comment>
<comment type="cofactor">
    <cofactor evidence="1">
        <name>Mg(2+)</name>
        <dbReference type="ChEBI" id="CHEBI:18420"/>
    </cofactor>
</comment>
<comment type="activity regulation">
    <text evidence="1">Inhibited by high concentrations of magnesium.</text>
</comment>
<comment type="subcellular location">
    <subcellularLocation>
        <location evidence="4">Plastid</location>
        <location evidence="4">Chloroplast</location>
    </subcellularLocation>
</comment>
<comment type="domain">
    <text evidence="8">The Asp-Xaa-Asp-Asp (DXDD) motif is important for the catalytic activity through binding to Mg(2+).</text>
</comment>
<comment type="similarity">
    <text evidence="7">Belongs to the terpene synthase family. Tpsc subfamily.</text>
</comment>
<sequence length="815" mass="93996">MFMSSSSSSHARRPQLSSFSYLHPPLPFPGLSFFNTRDKRVNFDSTRIICIAKSKPARTTPEYSDVLQTGLPLIVEDDIQEQEEPLEVSLENQIRQGVDIVKSMLGSMEDGETSISAYDTAWVALVENIHHPGSPQFPSSLQWIANNQLPDGSWGDPDVFLAHDRLINTLACVIALKKWNIHPHKCKRGLSFVKENISKLEKENEEHMLIGFEIAFPSLLEMAKKLGIEIPDDSPALQDIYTKRDLKLTRIPKDIMHNVPTTLLYSLEGLPSLDWEKLVKLQCTDGSFLFSPSSTAFALMHTKDGNCFSYINNLVHKFNGGVPTVYPVDLFEHIWCVDRLQRLGISRFFHPEIKECLGYVHRYWTKDGICWARNSRVQDIDDTAMGFRLLRLHGYEVSPDVFKQFRKGDEFVCFMGQSNQAITGIYNLYRASQMMFPEETILEEAKKFSVNFLREKRAASELLDKWIITKDLPGEVGFALDVPWYACLPRVETRLYIEQYGGQDDVWIGKTLYRMPYVNNNVYLELAKLDYNNCQSLHRIEWDNIQKWYEGYNLGGFGVNKRSLLRTYFLATSNIFEPERSVERLTWAKTVILVQAIASYFENSREERIEFANEFQKFLNTRGYINGRRLDVKQATKGLIEMVFATLNQFSLDALVVHGEDITHHLYQSWEKWVLTWQEGGDRREGEAELLVQTINLMAGHTHSQEEELYERLFKLTNTVCHQLGHYHHLNKDKQPQQVEDNGGYNNSNPESISKLQIESDMRELVQLVLNSSDGMDSNIKQTFLTVTKSFYYTAFTHPGTVNYHIAKVLFERVV</sequence>
<keyword id="KW-0150">Chloroplast</keyword>
<keyword id="KW-0413">Isomerase</keyword>
<keyword id="KW-0460">Magnesium</keyword>
<keyword id="KW-0479">Metal-binding</keyword>
<keyword id="KW-0934">Plastid</keyword>
<keyword id="KW-0809">Transit peptide</keyword>
<name>TPS28_TRIWF</name>
<protein>
    <recommendedName>
        <fullName evidence="7">(-)-kolavenyl diphosphate synthase TPS28, chloroplastic</fullName>
        <ecNumber evidence="5">5.5.1.28</ecNumber>
    </recommendedName>
    <alternativeName>
        <fullName evidence="6">Terpene synthase 28</fullName>
        <shortName evidence="6">TwTPS28</shortName>
    </alternativeName>
</protein>
<feature type="transit peptide" description="Chloroplast" evidence="4">
    <location>
        <begin position="1"/>
        <end position="51"/>
    </location>
</feature>
<feature type="chain" id="PRO_0000447691" description="(-)-kolavenyl diphosphate synthase TPS28, chloroplastic">
    <location>
        <begin position="52"/>
        <end position="815"/>
    </location>
</feature>
<feature type="short sequence motif" description="DXDD motif" evidence="8">
    <location>
        <begin position="379"/>
        <end position="382"/>
    </location>
</feature>
<feature type="binding site" evidence="3">
    <location>
        <position position="247"/>
    </location>
    <ligand>
        <name>substrate</name>
    </ligand>
</feature>
<feature type="binding site" evidence="2">
    <location>
        <position position="379"/>
    </location>
    <ligand>
        <name>Mg(2+)</name>
        <dbReference type="ChEBI" id="CHEBI:18420"/>
    </ligand>
</feature>
<feature type="binding site" evidence="2">
    <location>
        <position position="381"/>
    </location>
    <ligand>
        <name>Mg(2+)</name>
        <dbReference type="ChEBI" id="CHEBI:18420"/>
    </ligand>
</feature>
<feature type="binding site" evidence="3">
    <location>
        <position position="465"/>
    </location>
    <ligand>
        <name>substrate</name>
    </ligand>
</feature>